<evidence type="ECO:0000255" key="1">
    <source>
        <dbReference type="HAMAP-Rule" id="MF_01819"/>
    </source>
</evidence>
<dbReference type="EMBL" id="CP000016">
    <property type="protein sequence ID" value="AAZ41004.1"/>
    <property type="molecule type" value="Genomic_DNA"/>
</dbReference>
<dbReference type="RefSeq" id="WP_011282913.1">
    <property type="nucleotide sequence ID" value="NC_007292.1"/>
</dbReference>
<dbReference type="SMR" id="Q492T9"/>
<dbReference type="STRING" id="291272.BPEN_380"/>
<dbReference type="KEGG" id="bpn:BPEN_380"/>
<dbReference type="eggNOG" id="COG1846">
    <property type="taxonomic scope" value="Bacteria"/>
</dbReference>
<dbReference type="HOGENOM" id="CLU_083287_18_2_6"/>
<dbReference type="OrthoDB" id="5296557at2"/>
<dbReference type="Proteomes" id="UP000007794">
    <property type="component" value="Chromosome"/>
</dbReference>
<dbReference type="GO" id="GO:0003677">
    <property type="term" value="F:DNA binding"/>
    <property type="evidence" value="ECO:0007669"/>
    <property type="project" value="UniProtKB-UniRule"/>
</dbReference>
<dbReference type="GO" id="GO:0003700">
    <property type="term" value="F:DNA-binding transcription factor activity"/>
    <property type="evidence" value="ECO:0007669"/>
    <property type="project" value="UniProtKB-UniRule"/>
</dbReference>
<dbReference type="GO" id="GO:0006950">
    <property type="term" value="P:response to stress"/>
    <property type="evidence" value="ECO:0007669"/>
    <property type="project" value="TreeGrafter"/>
</dbReference>
<dbReference type="Gene3D" id="1.10.10.10">
    <property type="entry name" value="Winged helix-like DNA-binding domain superfamily/Winged helix DNA-binding domain"/>
    <property type="match status" value="1"/>
</dbReference>
<dbReference type="HAMAP" id="MF_01819">
    <property type="entry name" value="HTH_type_SlyA"/>
    <property type="match status" value="1"/>
</dbReference>
<dbReference type="InterPro" id="IPR000835">
    <property type="entry name" value="HTH_MarR-typ"/>
</dbReference>
<dbReference type="InterPro" id="IPR039422">
    <property type="entry name" value="MarR/SlyA-like"/>
</dbReference>
<dbReference type="InterPro" id="IPR023187">
    <property type="entry name" value="Tscrpt_reg_MarR-type_CS"/>
</dbReference>
<dbReference type="InterPro" id="IPR023071">
    <property type="entry name" value="Tscrpt_reg_SlyA"/>
</dbReference>
<dbReference type="InterPro" id="IPR036388">
    <property type="entry name" value="WH-like_DNA-bd_sf"/>
</dbReference>
<dbReference type="InterPro" id="IPR036390">
    <property type="entry name" value="WH_DNA-bd_sf"/>
</dbReference>
<dbReference type="NCBIfam" id="NF002926">
    <property type="entry name" value="PRK03573.1"/>
    <property type="match status" value="1"/>
</dbReference>
<dbReference type="PANTHER" id="PTHR33164:SF64">
    <property type="entry name" value="TRANSCRIPTIONAL REGULATOR SLYA"/>
    <property type="match status" value="1"/>
</dbReference>
<dbReference type="PANTHER" id="PTHR33164">
    <property type="entry name" value="TRANSCRIPTIONAL REGULATOR, MARR FAMILY"/>
    <property type="match status" value="1"/>
</dbReference>
<dbReference type="Pfam" id="PF01047">
    <property type="entry name" value="MarR"/>
    <property type="match status" value="1"/>
</dbReference>
<dbReference type="PRINTS" id="PR00598">
    <property type="entry name" value="HTHMARR"/>
</dbReference>
<dbReference type="SMART" id="SM00347">
    <property type="entry name" value="HTH_MARR"/>
    <property type="match status" value="1"/>
</dbReference>
<dbReference type="SUPFAM" id="SSF46785">
    <property type="entry name" value="Winged helix' DNA-binding domain"/>
    <property type="match status" value="1"/>
</dbReference>
<dbReference type="PROSITE" id="PS01117">
    <property type="entry name" value="HTH_MARR_1"/>
    <property type="match status" value="1"/>
</dbReference>
<dbReference type="PROSITE" id="PS50995">
    <property type="entry name" value="HTH_MARR_2"/>
    <property type="match status" value="1"/>
</dbReference>
<proteinExistence type="inferred from homology"/>
<accession>Q492T9</accession>
<organism>
    <name type="scientific">Blochmanniella pennsylvanica (strain BPEN)</name>
    <dbReference type="NCBI Taxonomy" id="291272"/>
    <lineage>
        <taxon>Bacteria</taxon>
        <taxon>Pseudomonadati</taxon>
        <taxon>Pseudomonadota</taxon>
        <taxon>Gammaproteobacteria</taxon>
        <taxon>Enterobacterales</taxon>
        <taxon>Enterobacteriaceae</taxon>
        <taxon>ant endosymbionts</taxon>
        <taxon>Candidatus Blochmanniella</taxon>
    </lineage>
</organism>
<gene>
    <name evidence="1" type="primary">slyA</name>
    <name type="ordered locus">BPEN_380</name>
</gene>
<protein>
    <recommendedName>
        <fullName evidence="1">Transcriptional regulator SlyA</fullName>
    </recommendedName>
</protein>
<feature type="chain" id="PRO_1000070351" description="Transcriptional regulator SlyA">
    <location>
        <begin position="1"/>
        <end position="144"/>
    </location>
</feature>
<feature type="domain" description="HTH marR-type" evidence="1">
    <location>
        <begin position="2"/>
        <end position="135"/>
    </location>
</feature>
<feature type="DNA-binding region" description="H-T-H motif" evidence="1">
    <location>
        <begin position="49"/>
        <end position="72"/>
    </location>
</feature>
<comment type="function">
    <text evidence="1">Transcription regulator that can specifically activate or repress expression of target genes.</text>
</comment>
<comment type="subunit">
    <text evidence="1">Homodimer.</text>
</comment>
<comment type="similarity">
    <text evidence="1">Belongs to the SlyA family.</text>
</comment>
<reference key="1">
    <citation type="journal article" date="2005" name="Genome Res.">
        <title>Genome sequence of Blochmannia pennsylvanicus indicates parallel evolutionary trends among bacterial mutualists of insects.</title>
        <authorList>
            <person name="Degnan P.H."/>
            <person name="Lazarus A.B."/>
            <person name="Wernegreen J.J."/>
        </authorList>
    </citation>
    <scope>NUCLEOTIDE SEQUENCE [LARGE SCALE GENOMIC DNA]</scope>
    <source>
        <strain>BPEN</strain>
    </source>
</reference>
<name>SLYA_BLOPB</name>
<sequence length="144" mass="16705">MESPLGSDLARLVRIWRALIDHRLKPLKLTQTHWITLHNICQLPPEQSQIQLAKAIGIEQPSLVRTLDQLEEKSLIIRHTCLNDRRAKRIKLTDNARPVINEVNRVISITRNEIFNGISNEETIFLNKIISKLEKNIINLHNKN</sequence>
<keyword id="KW-0010">Activator</keyword>
<keyword id="KW-0238">DNA-binding</keyword>
<keyword id="KW-1185">Reference proteome</keyword>
<keyword id="KW-0678">Repressor</keyword>
<keyword id="KW-0804">Transcription</keyword>
<keyword id="KW-0805">Transcription regulation</keyword>